<sequence length="832" mass="94501">MIAWRLPLCVLLVASVESHLGALGPKNVSQKDAEFERTYADDVNSELVNIYTFNHTVTRNRTEGVRVSVNVLNKQKGAPLLFVVRQKEAVVSFQVPLILRGLYQRKYLYQKVERTLCQPPTKNESEIQFFYVDVSTLSPVNTTYQLRVNRVDNFVLRTGELFTFNTTAAQPQYFKYEFPDGVDSVIVKVTSKKAFPCSVISIQDVLCPVYDLDNNVAFIGMYQTMTKKAAITVQRKDFPSNSFYVVVVVKTEDQACGGSLPFYPFVEDEPVDQGHRQKTLSVLVSQAVTSEAYVGGMLFCLGIFLSFYLLTVLLACWENWRQRKKTLLLAIDRACPESGHARVLADSFPGSAPYEGYNYGSFENGSGSTDGLVESAGSGDLSYSYQDRSFDAVGPRPRLDSMSSVEEDDYDTLTDIDSDKNVIRTKQYLCVADLARKDKRVLRKKYQIYFWNIATIAVFYALPVVQLVITYQTVVNVTGNQDICYYNFLCAHPLGNLSAFNNILSNLGYILLGLLFLLIILQREINHNRALLRNDLYALECGIPKHFGLFYAMGTALMMEGLLSACYHVCPNYTNFQFDTSFMYMIAGLCMLKLYQKRHPDINASAYSAYACLAIVIFFSVLGVVFGKGNTAFWIVFSVIHIISTLLLSTQLYYMGRWKLDSGIFRRILHVLYTDCIRQCSGPLYTDRMVLLVMGNIINWSLAAYGLIMRPNDFASYLLAIGICNLLLYFAFYIIMKLRSGERIKLIPLLCIVCTSVVWGFALFFFFQGLSTWQKTPAESREHNRDCILLDFFDDHDIWHFLSSIAMFGSFLVLLTLDDDLDTVQRDKIYVF</sequence>
<feature type="signal peptide" evidence="1">
    <location>
        <begin position="1"/>
        <end position="18"/>
    </location>
</feature>
<feature type="chain" id="PRO_0000032579" description="SID1 transmembrane family member 2">
    <location>
        <begin position="19"/>
        <end position="832"/>
    </location>
</feature>
<feature type="topological domain" description="Extracellular" evidence="3">
    <location>
        <begin position="19"/>
        <end position="293"/>
    </location>
</feature>
<feature type="transmembrane region" description="Helical" evidence="3">
    <location>
        <begin position="294"/>
        <end position="314"/>
    </location>
</feature>
<feature type="topological domain" description="Cytoplasmic" evidence="3">
    <location>
        <begin position="315"/>
        <end position="447"/>
    </location>
</feature>
<feature type="transmembrane region" description="Helical" evidence="3">
    <location>
        <begin position="448"/>
        <end position="468"/>
    </location>
</feature>
<feature type="topological domain" description="Extracellular" evidence="3">
    <location>
        <begin position="469"/>
        <end position="499"/>
    </location>
</feature>
<feature type="transmembrane region" description="Helical" evidence="3">
    <location>
        <begin position="500"/>
        <end position="520"/>
    </location>
</feature>
<feature type="topological domain" description="Cytoplasmic" evidence="3">
    <location>
        <begin position="521"/>
        <end position="546"/>
    </location>
</feature>
<feature type="transmembrane region" description="Helical" evidence="3">
    <location>
        <begin position="547"/>
        <end position="567"/>
    </location>
</feature>
<feature type="topological domain" description="Extracellular" evidence="3">
    <location>
        <begin position="568"/>
        <end position="605"/>
    </location>
</feature>
<feature type="transmembrane region" description="Helical" evidence="3">
    <location>
        <begin position="606"/>
        <end position="626"/>
    </location>
</feature>
<feature type="topological domain" description="Cytoplasmic" evidence="3">
    <location>
        <begin position="627"/>
        <end position="631"/>
    </location>
</feature>
<feature type="transmembrane region" description="Helical" evidence="3">
    <location>
        <begin position="632"/>
        <end position="652"/>
    </location>
</feature>
<feature type="topological domain" description="Extracellular" evidence="3">
    <location>
        <begin position="653"/>
        <end position="688"/>
    </location>
</feature>
<feature type="transmembrane region" description="Helical" evidence="3">
    <location>
        <begin position="689"/>
        <end position="709"/>
    </location>
</feature>
<feature type="topological domain" description="Cytoplasmic" evidence="3">
    <location>
        <begin position="710"/>
        <end position="715"/>
    </location>
</feature>
<feature type="transmembrane region" description="Helical" evidence="3">
    <location>
        <begin position="716"/>
        <end position="736"/>
    </location>
</feature>
<feature type="topological domain" description="Extracellular" evidence="3">
    <location>
        <begin position="737"/>
        <end position="746"/>
    </location>
</feature>
<feature type="transmembrane region" description="Helical" evidence="3">
    <location>
        <begin position="747"/>
        <end position="767"/>
    </location>
</feature>
<feature type="topological domain" description="Cytoplasmic" evidence="3">
    <location>
        <begin position="768"/>
        <end position="796"/>
    </location>
</feature>
<feature type="transmembrane region" description="Helical" evidence="3">
    <location>
        <begin position="797"/>
        <end position="817"/>
    </location>
</feature>
<feature type="topological domain" description="Extracellular" evidence="3">
    <location>
        <begin position="818"/>
        <end position="832"/>
    </location>
</feature>
<feature type="modified residue" description="Phosphoserine" evidence="16">
    <location>
        <position position="401"/>
    </location>
</feature>
<feature type="modified residue" description="Phosphoserine" evidence="16">
    <location>
        <position position="403"/>
    </location>
</feature>
<feature type="modified residue" description="Phosphoserine" evidence="16">
    <location>
        <position position="404"/>
    </location>
</feature>
<feature type="glycosylation site" description="N-linked (GlcNAc...) asparagine" evidence="3">
    <location>
        <position position="27"/>
    </location>
</feature>
<feature type="glycosylation site" description="N-linked (GlcNAc...) asparagine" evidence="3">
    <location>
        <position position="54"/>
    </location>
</feature>
<feature type="glycosylation site" description="N-linked (GlcNAc...) asparagine" evidence="3">
    <location>
        <position position="60"/>
    </location>
</feature>
<feature type="glycosylation site" description="N-linked (GlcNAc...) asparagine" evidence="3">
    <location>
        <position position="123"/>
    </location>
</feature>
<feature type="glycosylation site" description="N-linked (GlcNAc...) asparagine" evidence="3">
    <location>
        <position position="141"/>
    </location>
</feature>
<feature type="glycosylation site" description="N-linked (GlcNAc...) asparagine" evidence="4">
    <location>
        <position position="165"/>
    </location>
</feature>
<feature type="glycosylation site" description="N-linked (GlcNAc...) asparagine" evidence="3">
    <location>
        <position position="476"/>
    </location>
</feature>
<feature type="glycosylation site" description="N-linked (GlcNAc...) asparagine" evidence="3">
    <location>
        <position position="496"/>
    </location>
</feature>
<feature type="glycosylation site" description="N-linked (GlcNAc...) asparagine" evidence="3">
    <location>
        <position position="572"/>
    </location>
</feature>
<feature type="glycosylation site" description="N-linked (GlcNAc...) asparagine" evidence="3">
    <location>
        <position position="603"/>
    </location>
</feature>
<feature type="splice variant" id="VSP_013525" description="In isoform 2." evidence="14">
    <original>Q</original>
    <variation>QGHDQFKRRLPSGQMRQLCIAM</variation>
    <location>
        <position position="386"/>
    </location>
</feature>
<feature type="mutagenesis site" description="Decreased gymnosis and decreased affinity for 700-bp RNA. No effect on subcellular location." evidence="7 12">
    <original>F</original>
    <variation>T</variation>
    <location>
        <position position="154"/>
    </location>
</feature>
<feature type="mutagenesis site" description="Decreased lysosomal localization. Decreased interaction with AP-1 and AP-2 complexes; when associated with S-410. Almost complete loss of lysosomal localization and decreased interaction with AP-1 and AP-2 complexes; when associated with S-428. Decreased interaction with AP-1 and AP-2 complexes, almost complete loss of lysosomal localization, mislocalization to the Golgi apparatus and almost complete loss of RNA degradation by lysosomes; when associated with S-410 and S-428." evidence="13">
    <original>Y</original>
    <variation>S</variation>
    <location>
        <position position="359"/>
    </location>
</feature>
<feature type="mutagenesis site" description="Drastically decreased lysosomal localization. Decreased interaction with AP-1 and AP-2 complexes; when associated with S-359. Decreased interaction with AP-1 and AP-2 complexes, almost complete loss of lysosomal localization, mislocalization to the Golgi apparatus and almost complete loss of RNA degradation by lysosomes; when associated with S-359 and S-428. No effect on interaction with AP-1 and AP-2 complexes, nor on RNA uptake by lysosomes; when associated with S-428." evidence="13">
    <original>Y</original>
    <variation>S</variation>
    <location>
        <position position="410"/>
    </location>
</feature>
<feature type="mutagenesis site" description="Drastically decreased lysosomal localization. Almost complete loss of lysosomal localization and decreased interaction with AP-1 and AP-2 complexes; when associated with S-359. No effect on interaction with AP-1 and AP-2 complexes, nor on RNA uptake by lysosomes; when associated with S-410. Decreased interaction with AP-1 and AP-2 complexes, almost complete loss of lysosomal localization, mislocalization to the Golgi apparatus and almost complete loss of RNA degradation by lysosomes; when associated with S-359 and S-410." evidence="13">
    <original>Y</original>
    <variation>S</variation>
    <location>
        <position position="428"/>
    </location>
</feature>
<feature type="mutagenesis site" description="Decreased gymnosis and RNA and DNA uptake by lysosomes and degradation. Decreased affinity for 700-bp RNA. No effect on lysosomal subcellular location, nor on LAMP2-binding." evidence="7 8 12">
    <original>S</original>
    <variation>A</variation>
    <location>
        <position position="564"/>
    </location>
</feature>
<feature type="mutagenesis site" description="No effect on lysosomal localization, nor on RNA uptake by lysosomes." evidence="13">
    <original>Y</original>
    <variation>S</variation>
    <location>
        <position position="830"/>
    </location>
</feature>
<dbReference type="EMBL" id="BC006873">
    <property type="protein sequence ID" value="AAH06873.1"/>
    <property type="molecule type" value="mRNA"/>
</dbReference>
<dbReference type="EMBL" id="BC023957">
    <property type="protein sequence ID" value="AAH23957.1"/>
    <property type="molecule type" value="mRNA"/>
</dbReference>
<dbReference type="EMBL" id="BC051101">
    <property type="protein sequence ID" value="AAH51101.1"/>
    <property type="molecule type" value="mRNA"/>
</dbReference>
<dbReference type="CCDS" id="CCDS23138.1">
    <molecule id="Q8CIF6-1"/>
</dbReference>
<dbReference type="CCDS" id="CCDS72225.1">
    <molecule id="Q8CIF6-2"/>
</dbReference>
<dbReference type="RefSeq" id="NP_001276597.1">
    <molecule id="Q8CIF6-2"/>
    <property type="nucleotide sequence ID" value="NM_001289668.1"/>
</dbReference>
<dbReference type="RefSeq" id="NP_758461.1">
    <molecule id="Q8CIF6-1"/>
    <property type="nucleotide sequence ID" value="NM_172257.4"/>
</dbReference>
<dbReference type="SMR" id="Q8CIF6"/>
<dbReference type="BioGRID" id="229546">
    <property type="interactions" value="35"/>
</dbReference>
<dbReference type="FunCoup" id="Q8CIF6">
    <property type="interactions" value="757"/>
</dbReference>
<dbReference type="IntAct" id="Q8CIF6">
    <property type="interactions" value="34"/>
</dbReference>
<dbReference type="STRING" id="10090.ENSMUSP00000110220"/>
<dbReference type="GlyCosmos" id="Q8CIF6">
    <property type="glycosylation" value="10 sites, No reported glycans"/>
</dbReference>
<dbReference type="GlyGen" id="Q8CIF6">
    <property type="glycosylation" value="10 sites"/>
</dbReference>
<dbReference type="iPTMnet" id="Q8CIF6"/>
<dbReference type="PhosphoSitePlus" id="Q8CIF6"/>
<dbReference type="SwissPalm" id="Q8CIF6"/>
<dbReference type="jPOST" id="Q8CIF6"/>
<dbReference type="PaxDb" id="10090-ENSMUSP00000044290"/>
<dbReference type="ProteomicsDB" id="261402">
    <molecule id="Q8CIF6-1"/>
</dbReference>
<dbReference type="ProteomicsDB" id="261403">
    <molecule id="Q8CIF6-2"/>
</dbReference>
<dbReference type="Pumba" id="Q8CIF6"/>
<dbReference type="Antibodypedia" id="32315">
    <property type="antibodies" value="94 antibodies from 20 providers"/>
</dbReference>
<dbReference type="DNASU" id="214597"/>
<dbReference type="Ensembl" id="ENSMUST00000038488.17">
    <molecule id="Q8CIF6-1"/>
    <property type="protein sequence ID" value="ENSMUSP00000044290.10"/>
    <property type="gene ID" value="ENSMUSG00000034908.17"/>
</dbReference>
<dbReference type="Ensembl" id="ENSMUST00000114573.9">
    <molecule id="Q8CIF6-2"/>
    <property type="protein sequence ID" value="ENSMUSP00000110220.3"/>
    <property type="gene ID" value="ENSMUSG00000034908.17"/>
</dbReference>
<dbReference type="GeneID" id="214597"/>
<dbReference type="KEGG" id="mmu:214597"/>
<dbReference type="UCSC" id="uc009pgt.2">
    <molecule id="Q8CIF6-1"/>
    <property type="organism name" value="mouse"/>
</dbReference>
<dbReference type="UCSC" id="uc009pgu.2">
    <molecule id="Q8CIF6-2"/>
    <property type="organism name" value="mouse"/>
</dbReference>
<dbReference type="AGR" id="MGI:2446134"/>
<dbReference type="CTD" id="51092"/>
<dbReference type="MGI" id="MGI:2446134">
    <property type="gene designation" value="Sidt2"/>
</dbReference>
<dbReference type="VEuPathDB" id="HostDB:ENSMUSG00000034908"/>
<dbReference type="eggNOG" id="ENOG502QUXZ">
    <property type="taxonomic scope" value="Eukaryota"/>
</dbReference>
<dbReference type="GeneTree" id="ENSGT00390000010091"/>
<dbReference type="HOGENOM" id="CLU_357018_0_0_1"/>
<dbReference type="InParanoid" id="Q8CIF6"/>
<dbReference type="OMA" id="GLHQTMT"/>
<dbReference type="PhylomeDB" id="Q8CIF6"/>
<dbReference type="TreeFam" id="TF313076"/>
<dbReference type="BioGRID-ORCS" id="214597">
    <property type="hits" value="0 hits in 77 CRISPR screens"/>
</dbReference>
<dbReference type="ChiTaRS" id="Sidt2">
    <property type="organism name" value="mouse"/>
</dbReference>
<dbReference type="PRO" id="PR:Q8CIF6"/>
<dbReference type="Proteomes" id="UP000000589">
    <property type="component" value="Chromosome 9"/>
</dbReference>
<dbReference type="RNAct" id="Q8CIF6">
    <property type="molecule type" value="protein"/>
</dbReference>
<dbReference type="Bgee" id="ENSMUSG00000034908">
    <property type="expression patterns" value="Expressed in granulocyte and 67 other cell types or tissues"/>
</dbReference>
<dbReference type="ExpressionAtlas" id="Q8CIF6">
    <property type="expression patterns" value="baseline and differential"/>
</dbReference>
<dbReference type="GO" id="GO:0005765">
    <property type="term" value="C:lysosomal membrane"/>
    <property type="evidence" value="ECO:0000314"/>
    <property type="project" value="UniProtKB"/>
</dbReference>
<dbReference type="GO" id="GO:0005764">
    <property type="term" value="C:lysosome"/>
    <property type="evidence" value="ECO:0000314"/>
    <property type="project" value="UniProtKB"/>
</dbReference>
<dbReference type="GO" id="GO:0005886">
    <property type="term" value="C:plasma membrane"/>
    <property type="evidence" value="ECO:0000314"/>
    <property type="project" value="UniProtKB"/>
</dbReference>
<dbReference type="GO" id="GO:0035650">
    <property type="term" value="F:AP-1 adaptor complex binding"/>
    <property type="evidence" value="ECO:0000314"/>
    <property type="project" value="UniProtKB"/>
</dbReference>
<dbReference type="GO" id="GO:0035612">
    <property type="term" value="F:AP-2 adaptor complex binding"/>
    <property type="evidence" value="ECO:0000314"/>
    <property type="project" value="UniProtKB"/>
</dbReference>
<dbReference type="GO" id="GO:0003677">
    <property type="term" value="F:DNA binding"/>
    <property type="evidence" value="ECO:0007669"/>
    <property type="project" value="UniProtKB-KW"/>
</dbReference>
<dbReference type="GO" id="GO:0003725">
    <property type="term" value="F:double-stranded RNA binding"/>
    <property type="evidence" value="ECO:0000314"/>
    <property type="project" value="WormBase"/>
</dbReference>
<dbReference type="GO" id="GO:0051032">
    <property type="term" value="F:nucleic acid transmembrane transporter activity"/>
    <property type="evidence" value="ECO:0000314"/>
    <property type="project" value="UniProtKB"/>
</dbReference>
<dbReference type="GO" id="GO:0000902">
    <property type="term" value="P:cell morphogenesis"/>
    <property type="evidence" value="ECO:0000315"/>
    <property type="project" value="MGI"/>
</dbReference>
<dbReference type="GO" id="GO:0042593">
    <property type="term" value="P:glucose homeostasis"/>
    <property type="evidence" value="ECO:0000315"/>
    <property type="project" value="MGI"/>
</dbReference>
<dbReference type="GO" id="GO:0061178">
    <property type="term" value="P:regulation of insulin secretion involved in cellular response to glucose stimulus"/>
    <property type="evidence" value="ECO:0000315"/>
    <property type="project" value="MGI"/>
</dbReference>
<dbReference type="GO" id="GO:0009749">
    <property type="term" value="P:response to glucose"/>
    <property type="evidence" value="ECO:0000315"/>
    <property type="project" value="MGI"/>
</dbReference>
<dbReference type="GO" id="GO:0006401">
    <property type="term" value="P:RNA catabolic process"/>
    <property type="evidence" value="ECO:0000314"/>
    <property type="project" value="UniProtKB"/>
</dbReference>
<dbReference type="GO" id="GO:0050658">
    <property type="term" value="P:RNA transport"/>
    <property type="evidence" value="ECO:0000314"/>
    <property type="project" value="UniProtKB"/>
</dbReference>
<dbReference type="GO" id="GO:0003323">
    <property type="term" value="P:type B pancreatic cell development"/>
    <property type="evidence" value="ECO:0000315"/>
    <property type="project" value="MGI"/>
</dbReference>
<dbReference type="GO" id="GO:0044342">
    <property type="term" value="P:type B pancreatic cell proliferation"/>
    <property type="evidence" value="ECO:0000315"/>
    <property type="project" value="MGI"/>
</dbReference>
<dbReference type="InterPro" id="IPR025958">
    <property type="entry name" value="SID1_TM_fam"/>
</dbReference>
<dbReference type="PANTHER" id="PTHR12185:SF16">
    <property type="entry name" value="SID1 TRANSMEMBRANE FAMILY MEMBER 2"/>
    <property type="match status" value="1"/>
</dbReference>
<dbReference type="PANTHER" id="PTHR12185">
    <property type="entry name" value="SID1 TRANSMEMBRANE FAMILY MEMEBER"/>
    <property type="match status" value="1"/>
</dbReference>
<dbReference type="Pfam" id="PF13965">
    <property type="entry name" value="SID-1_RNA_chan"/>
    <property type="match status" value="1"/>
</dbReference>
<gene>
    <name type="primary">Sidt2</name>
</gene>
<name>SIDT2_MOUSE</name>
<accession>Q8CIF6</accession>
<accession>Q80XD7</accession>
<accession>Q922R2</accession>
<protein>
    <recommendedName>
        <fullName>SID1 transmembrane family member 2</fullName>
    </recommendedName>
</protein>
<proteinExistence type="evidence at protein level"/>
<reference key="1">
    <citation type="journal article" date="2004" name="Genome Res.">
        <title>The status, quality, and expansion of the NIH full-length cDNA project: the Mammalian Gene Collection (MGC).</title>
        <authorList>
            <consortium name="The MGC Project Team"/>
        </authorList>
    </citation>
    <scope>NUCLEOTIDE SEQUENCE [LARGE SCALE MRNA] (ISOFORMS 1 AND 2)</scope>
    <source>
        <strain>FVB/N</strain>
        <tissue>Liver</tissue>
        <tissue>Mammary tumor</tissue>
    </source>
</reference>
<reference key="2">
    <citation type="submission" date="2009-01" db="UniProtKB">
        <authorList>
            <person name="Lubec G."/>
            <person name="Sunyer B."/>
            <person name="Chen W.-Q."/>
        </authorList>
    </citation>
    <scope>PROTEIN SEQUENCE OF 228-235</scope>
    <scope>IDENTIFICATION BY MASS SPECTROMETRY</scope>
    <source>
        <strain>OF1</strain>
        <tissue>Hippocampus</tissue>
    </source>
</reference>
<reference key="3">
    <citation type="journal article" date="2009" name="Nat. Biotechnol.">
        <title>Mass-spectrometric identification and relative quantification of N-linked cell surface glycoproteins.</title>
        <authorList>
            <person name="Wollscheid B."/>
            <person name="Bausch-Fluck D."/>
            <person name="Henderson C."/>
            <person name="O'Brien R."/>
            <person name="Bibel M."/>
            <person name="Schiess R."/>
            <person name="Aebersold R."/>
            <person name="Watts J.D."/>
        </authorList>
    </citation>
    <scope>GLYCOSYLATION [LARGE SCALE ANALYSIS] AT ASN-165</scope>
</reference>
<reference key="4">
    <citation type="journal article" date="2010" name="Biochem. Biophys. Res. Commun.">
        <title>SID1 transmembrane family, member 2 (Sidt2): A novel lysosomal membrane protein.</title>
        <authorList>
            <person name="Jialin G."/>
            <person name="Xuefan G."/>
            <person name="Huiwen Z."/>
        </authorList>
    </citation>
    <scope>SUBCELLULAR LOCATION</scope>
    <scope>GLYCOSYLATION</scope>
    <scope>TISSUE SPECIFICITY</scope>
</reference>
<reference key="5">
    <citation type="journal article" date="2010" name="Cell">
        <title>A tissue-specific atlas of mouse protein phosphorylation and expression.</title>
        <authorList>
            <person name="Huttlin E.L."/>
            <person name="Jedrychowski M.P."/>
            <person name="Elias J.E."/>
            <person name="Goswami T."/>
            <person name="Rad R."/>
            <person name="Beausoleil S.A."/>
            <person name="Villen J."/>
            <person name="Haas W."/>
            <person name="Sowa M.E."/>
            <person name="Gygi S.P."/>
        </authorList>
    </citation>
    <scope>PHOSPHORYLATION [LARGE SCALE ANALYSIS] AT SER-401; SER-403 AND SER-404</scope>
    <scope>IDENTIFICATION BY MASS SPECTROMETRY [LARGE SCALE ANALYSIS]</scope>
    <source>
        <tissue>Brain</tissue>
        <tissue>Kidney</tissue>
        <tissue>Liver</tissue>
        <tissue>Pancreas</tissue>
        <tissue>Testis</tissue>
    </source>
</reference>
<reference key="6">
    <citation type="journal article" date="2013" name="PLoS ONE">
        <title>Impaired glucose tolerance in a mouse model of Sidt2 deficiency.</title>
        <authorList>
            <person name="Gao J."/>
            <person name="Gu X."/>
            <person name="Mahuran D.J."/>
            <person name="Wang Z."/>
            <person name="Zhang H."/>
        </authorList>
    </citation>
    <scope>DISRUPTION PHENOTYPE</scope>
    <scope>TISSUE SPECIFICITY</scope>
</reference>
<reference key="7">
    <citation type="journal article" date="2015" name="J. Biol. Chem.">
        <title>Systemic RNA interference deficiency-1 (SID-1) extracellular domain selectively binds long double-stranded RNA and is required for RNA transport by SID-1.</title>
        <authorList>
            <person name="Li W."/>
            <person name="Koutmou K.S."/>
            <person name="Leahy D.J."/>
            <person name="Li M."/>
        </authorList>
    </citation>
    <scope>FUNCTION</scope>
    <scope>MUTAGENESIS OF PHE-154 AND SER-564</scope>
</reference>
<reference key="8">
    <citation type="journal article" date="2016" name="Autophagy">
        <title>Lysosomal putative RNA transporter SIDT2 mediates direct uptake of RNA by lysosomes.</title>
        <authorList>
            <person name="Aizawa S."/>
            <person name="Fujiwara Y."/>
            <person name="Contu V.R."/>
            <person name="Hase K."/>
            <person name="Takahashi M."/>
            <person name="Kikuchi H."/>
            <person name="Kabuta C."/>
            <person name="Wada K."/>
            <person name="Kabuta T."/>
        </authorList>
    </citation>
    <scope>FUNCTION</scope>
    <scope>INTERACTION WITH LAMP2</scope>
    <scope>SUBCELLULAR LOCATION</scope>
    <scope>MUTAGENESIS OF SER-564</scope>
</reference>
<reference key="9">
    <citation type="journal article" date="2016" name="Biochem. Biophys. Res. Commun.">
        <title>Spontaneous nonalcoholic fatty liver disease and ER stress in Sidt2 deficiency mice.</title>
        <authorList>
            <person name="Gao J."/>
            <person name="Zhang Y."/>
            <person name="Yu C."/>
            <person name="Tan F."/>
            <person name="Wang L."/>
        </authorList>
    </citation>
    <scope>DISRUPTION PHENOTYPE</scope>
</reference>
<reference key="10">
    <citation type="journal article" date="2017" name="Autophagy">
        <title>Lysosomal membrane protein SIDT2 mediates the direct uptake of DNA by lysosomes.</title>
        <authorList>
            <person name="Aizawa S."/>
            <person name="Contu V.R."/>
            <person name="Fujiwara Y."/>
            <person name="Hase K."/>
            <person name="Kikuchi H."/>
            <person name="Kabuta C."/>
            <person name="Wada K."/>
            <person name="Kabuta T."/>
        </authorList>
    </citation>
    <scope>FUNCTION</scope>
    <scope>MUTAGENESIS OF SER-564</scope>
</reference>
<reference key="11">
    <citation type="journal article" date="2017" name="FEBS Lett.">
        <title>Identification of Sidt2 as a lysosomal cation-conducting protein.</title>
        <authorList>
            <person name="Beck A."/>
            <person name="Fecher-Trost C."/>
            <person name="Wolske K."/>
            <person name="Philipp S.E."/>
            <person name="Flockerzi V."/>
            <person name="Wissenbach U."/>
        </authorList>
    </citation>
    <scope>TISSUE SPECIFICITY</scope>
</reference>
<reference key="12">
    <citation type="journal article" date="2017" name="J. Cell Sci.">
        <title>Lysosomal targeting of SIDT2 via multiple YXXPhi motifs is required for SIDT2 function in the process of RNautophagy.</title>
        <authorList>
            <person name="Contu V.R."/>
            <person name="Hase K."/>
            <person name="Kozuka-Hata H."/>
            <person name="Oyama M."/>
            <person name="Fujiwara Y."/>
            <person name="Kabuta C."/>
            <person name="Takahashi M."/>
            <person name="Hakuno F."/>
            <person name="Takahashi S.I."/>
            <person name="Wada K."/>
            <person name="Kabuta T."/>
        </authorList>
    </citation>
    <scope>FUNCTION</scope>
    <scope>SUBCELLULAR LOCATION</scope>
    <scope>MUTAGENESIS OF TYR-359; TYR-410; TYR-428 AND TYR-830</scope>
    <scope>INTERACTION WITH AP-1 AND AP-2 COMPLEXES</scope>
</reference>
<reference key="13">
    <citation type="journal article" date="2017" name="RNA Biol.">
        <title>SIDT2 mediates gymnosis, the uptake of naked single-stranded oligonucleotides into living cells.</title>
        <authorList>
            <person name="Takahashi M."/>
            <person name="Contu V.R."/>
            <person name="Kabuta C."/>
            <person name="Hase K."/>
            <person name="Fujiwara Y."/>
            <person name="Wada K."/>
            <person name="Kabuta T."/>
        </authorList>
    </citation>
    <scope>FUNCTION</scope>
    <scope>MUTAGENESIS OF PHE-154 AND SER-564</scope>
</reference>
<comment type="function">
    <text evidence="7 8 10 12 13">Mediates the translocation of RNA and DNA across the lysosomal membrane during RNA and DNA autophagy (RDA), a process in which RNA and DNA is directly imported into lysosomes in an ATP-dependent manner, and degraded (PubMed:27046251, PubMed:27846365, PubMed:28724756). Involved in the uptake of single-stranded oligonucleotides by living cells, a process called gymnosis (PubMed:28277980). In vitro, mediates the uptake of linear DNA more efficiently than that of circular DNA, but exhibits similar uptake efficacy toward RNA and DNA (PubMed:27846365). Binds long double-stranded RNA (dsRNA) (500 - 700 base pairs), but not dsRNA shorter than 100 bp (PubMed:26067272).</text>
</comment>
<comment type="subunit">
    <text evidence="8 13">Interacts with adapter protein complex 1 (AP-1) and AP-2, but not AP-3 and AP-4 (PubMed:28724756). Interacts with LAMP2 (PubMed:27046251).</text>
</comment>
<comment type="subcellular location">
    <subcellularLocation>
        <location evidence="5 8 13">Lysosome membrane</location>
        <topology evidence="5">Multi-pass membrane protein</topology>
    </subcellularLocation>
    <subcellularLocation>
        <location evidence="2">Cell membrane</location>
    </subcellularLocation>
    <text evidence="2 13">Mainly localizes to lysosomes and only partly to the plasma membrane (By similarity). Lysosomal localization is required for SIDT2-mediated intracellular degradation of endogenous RNA (PubMed:28724756).</text>
</comment>
<comment type="alternative products">
    <event type="alternative splicing"/>
    <isoform>
        <id>Q8CIF6-1</id>
        <name>1</name>
        <sequence type="displayed"/>
    </isoform>
    <isoform>
        <id>Q8CIF6-2</id>
        <name>2</name>
        <sequence type="described" ref="VSP_013525"/>
    </isoform>
</comment>
<comment type="tissue specificity">
    <text evidence="5 6 11">Widely expressed, including in the liver, brain and kidney (at protein level).</text>
</comment>
<comment type="PTM">
    <text evidence="4 5">Glycosylated.</text>
</comment>
<comment type="disruption phenotype">
    <text evidence="6 9">Knockout mice demonstrate a statistically significant departure from Mendel's law, but there is no significant differences in their weights or appearance as compared to wild-type controls as newborns. At 5 weeks of age, male mice show reduced weight and size as compared to control animals. This phenotype is not observed in females. Mutant animals exhibit increased fasting glucose levels and impaired glucose tolerance, probably due to impaired insulin granule exocytosis by pancreatic islet cells (PubMed:23776622). At 3 months of age, serum triglyceride and free fatty acid levels increase in knockout mice fed on normal chow. Mice gradually develop hepatic steatosis, with varying degrees of inflammatory changes (PubMed:27233614).</text>
</comment>
<comment type="similarity">
    <text evidence="15">Belongs to the SID1 family.</text>
</comment>
<keyword id="KW-0025">Alternative splicing</keyword>
<keyword id="KW-1003">Cell membrane</keyword>
<keyword id="KW-0903">Direct protein sequencing</keyword>
<keyword id="KW-0238">DNA-binding</keyword>
<keyword id="KW-0325">Glycoprotein</keyword>
<keyword id="KW-0458">Lysosome</keyword>
<keyword id="KW-0472">Membrane</keyword>
<keyword id="KW-0597">Phosphoprotein</keyword>
<keyword id="KW-1185">Reference proteome</keyword>
<keyword id="KW-0694">RNA-binding</keyword>
<keyword id="KW-0732">Signal</keyword>
<keyword id="KW-0812">Transmembrane</keyword>
<keyword id="KW-1133">Transmembrane helix</keyword>
<keyword id="KW-0813">Transport</keyword>
<evidence type="ECO:0000250" key="1"/>
<evidence type="ECO:0000250" key="2">
    <source>
        <dbReference type="UniProtKB" id="Q8NBJ9"/>
    </source>
</evidence>
<evidence type="ECO:0000255" key="3"/>
<evidence type="ECO:0000269" key="4">
    <source>
    </source>
</evidence>
<evidence type="ECO:0000269" key="5">
    <source>
    </source>
</evidence>
<evidence type="ECO:0000269" key="6">
    <source>
    </source>
</evidence>
<evidence type="ECO:0000269" key="7">
    <source>
    </source>
</evidence>
<evidence type="ECO:0000269" key="8">
    <source>
    </source>
</evidence>
<evidence type="ECO:0000269" key="9">
    <source>
    </source>
</evidence>
<evidence type="ECO:0000269" key="10">
    <source>
    </source>
</evidence>
<evidence type="ECO:0000269" key="11">
    <source>
    </source>
</evidence>
<evidence type="ECO:0000269" key="12">
    <source>
    </source>
</evidence>
<evidence type="ECO:0000269" key="13">
    <source>
    </source>
</evidence>
<evidence type="ECO:0000303" key="14">
    <source>
    </source>
</evidence>
<evidence type="ECO:0000305" key="15"/>
<evidence type="ECO:0007744" key="16">
    <source>
    </source>
</evidence>
<organism>
    <name type="scientific">Mus musculus</name>
    <name type="common">Mouse</name>
    <dbReference type="NCBI Taxonomy" id="10090"/>
    <lineage>
        <taxon>Eukaryota</taxon>
        <taxon>Metazoa</taxon>
        <taxon>Chordata</taxon>
        <taxon>Craniata</taxon>
        <taxon>Vertebrata</taxon>
        <taxon>Euteleostomi</taxon>
        <taxon>Mammalia</taxon>
        <taxon>Eutheria</taxon>
        <taxon>Euarchontoglires</taxon>
        <taxon>Glires</taxon>
        <taxon>Rodentia</taxon>
        <taxon>Myomorpha</taxon>
        <taxon>Muroidea</taxon>
        <taxon>Muridae</taxon>
        <taxon>Murinae</taxon>
        <taxon>Mus</taxon>
        <taxon>Mus</taxon>
    </lineage>
</organism>